<keyword id="KW-0002">3D-structure</keyword>
<keyword id="KW-0028">Amino-acid biosynthesis</keyword>
<keyword id="KW-0150">Chloroplast</keyword>
<keyword id="KW-0368">Histidine biosynthesis</keyword>
<keyword id="KW-0413">Isomerase</keyword>
<keyword id="KW-0479">Metal-binding</keyword>
<keyword id="KW-0934">Plastid</keyword>
<keyword id="KW-1185">Reference proteome</keyword>
<keyword id="KW-0915">Sodium</keyword>
<keyword id="KW-0809">Transit peptide</keyword>
<reference key="1">
    <citation type="journal article" date="2011" name="Nature">
        <title>The Medicago genome provides insight into the evolution of rhizobial symbioses.</title>
        <authorList>
            <person name="Young N.D."/>
            <person name="Debelle F."/>
            <person name="Oldroyd G.E.D."/>
            <person name="Geurts R."/>
            <person name="Cannon S.B."/>
            <person name="Udvardi M.K."/>
            <person name="Benedito V.A."/>
            <person name="Mayer K.F.X."/>
            <person name="Gouzy J."/>
            <person name="Schoof H."/>
            <person name="Van de Peer Y."/>
            <person name="Proost S."/>
            <person name="Cook D.R."/>
            <person name="Meyers B.C."/>
            <person name="Spannagl M."/>
            <person name="Cheung F."/>
            <person name="De Mita S."/>
            <person name="Krishnakumar V."/>
            <person name="Gundlach H."/>
            <person name="Zhou S."/>
            <person name="Mudge J."/>
            <person name="Bharti A.K."/>
            <person name="Murray J.D."/>
            <person name="Naoumkina M.A."/>
            <person name="Rosen B."/>
            <person name="Silverstein K.A.T."/>
            <person name="Tang H."/>
            <person name="Rombauts S."/>
            <person name="Zhao P.X."/>
            <person name="Zhou P."/>
            <person name="Barbe V."/>
            <person name="Bardou P."/>
            <person name="Bechner M."/>
            <person name="Bellec A."/>
            <person name="Berger A."/>
            <person name="Berges H."/>
            <person name="Bidwell S."/>
            <person name="Bisseling T."/>
            <person name="Choisne N."/>
            <person name="Couloux A."/>
            <person name="Denny R."/>
            <person name="Deshpande S."/>
            <person name="Dai X."/>
            <person name="Doyle J.J."/>
            <person name="Dudez A.-M."/>
            <person name="Farmer A.D."/>
            <person name="Fouteau S."/>
            <person name="Franken C."/>
            <person name="Gibelin C."/>
            <person name="Gish J."/>
            <person name="Goldstein S."/>
            <person name="Gonzalez A.J."/>
            <person name="Green P.J."/>
            <person name="Hallab A."/>
            <person name="Hartog M."/>
            <person name="Hua A."/>
            <person name="Humphray S.J."/>
            <person name="Jeong D.-H."/>
            <person name="Jing Y."/>
            <person name="Jocker A."/>
            <person name="Kenton S.M."/>
            <person name="Kim D.-J."/>
            <person name="Klee K."/>
            <person name="Lai H."/>
            <person name="Lang C."/>
            <person name="Lin S."/>
            <person name="Macmil S.L."/>
            <person name="Magdelenat G."/>
            <person name="Matthews L."/>
            <person name="McCorrison J."/>
            <person name="Monaghan E.L."/>
            <person name="Mun J.-H."/>
            <person name="Najar F.Z."/>
            <person name="Nicholson C."/>
            <person name="Noirot C."/>
            <person name="O'Bleness M."/>
            <person name="Paule C.R."/>
            <person name="Poulain J."/>
            <person name="Prion F."/>
            <person name="Qin B."/>
            <person name="Qu C."/>
            <person name="Retzel E.F."/>
            <person name="Riddle C."/>
            <person name="Sallet E."/>
            <person name="Samain S."/>
            <person name="Samson N."/>
            <person name="Sanders I."/>
            <person name="Saurat O."/>
            <person name="Scarpelli C."/>
            <person name="Schiex T."/>
            <person name="Segurens B."/>
            <person name="Severin A.J."/>
            <person name="Sherrier D.J."/>
            <person name="Shi R."/>
            <person name="Sims S."/>
            <person name="Singer S.R."/>
            <person name="Sinharoy S."/>
            <person name="Sterck L."/>
            <person name="Viollet A."/>
            <person name="Wang B.-B."/>
            <person name="Wang K."/>
            <person name="Wang M."/>
            <person name="Wang X."/>
            <person name="Warfsmann J."/>
            <person name="Weissenbach J."/>
            <person name="White D.D."/>
            <person name="White J.D."/>
            <person name="Wiley G.B."/>
            <person name="Wincker P."/>
            <person name="Xing Y."/>
            <person name="Yang L."/>
            <person name="Yao Z."/>
            <person name="Ying F."/>
            <person name="Zhai J."/>
            <person name="Zhou L."/>
            <person name="Zuber A."/>
            <person name="Denarie J."/>
            <person name="Dixon R.A."/>
            <person name="May G.D."/>
            <person name="Schwartz D.C."/>
            <person name="Rogers J."/>
            <person name="Quetier F."/>
            <person name="Town C.D."/>
            <person name="Roe B.A."/>
        </authorList>
    </citation>
    <scope>NUCLEOTIDE SEQUENCE [LARGE SCALE GENOMIC DNA]</scope>
    <source>
        <strain>cv. Jemalong A17</strain>
    </source>
</reference>
<reference key="2">
    <citation type="journal article" date="2014" name="BMC Genomics">
        <title>An improved genome release (version Mt4.0) for the model legume Medicago truncatula.</title>
        <authorList>
            <person name="Tang H."/>
            <person name="Krishnakumar V."/>
            <person name="Bidwell S."/>
            <person name="Rosen B."/>
            <person name="Chan A."/>
            <person name="Zhou S."/>
            <person name="Gentzbittel L."/>
            <person name="Childs K.L."/>
            <person name="Yandell M."/>
            <person name="Gundlach H."/>
            <person name="Mayer K.F."/>
            <person name="Schwartz D.C."/>
            <person name="Town C.D."/>
        </authorList>
    </citation>
    <scope>GENOME REANNOTATION</scope>
    <source>
        <strain>cv. Jemalong A17</strain>
    </source>
</reference>
<reference key="3">
    <citation type="journal article" date="2018" name="Nat. Plants">
        <title>Whole-genome landscape of Medicago truncatula symbiotic genes.</title>
        <authorList>
            <person name="Pecrix Y."/>
            <person name="Staton S.E."/>
            <person name="Sallet E."/>
            <person name="Lelandais-Briere C."/>
            <person name="Moreau S."/>
            <person name="Carrere S."/>
            <person name="Blein T."/>
            <person name="Jardinaud M.F."/>
            <person name="Latrasse D."/>
            <person name="Zouine M."/>
            <person name="Zahm M."/>
            <person name="Kreplak J."/>
            <person name="Mayjonade B."/>
            <person name="Satge C."/>
            <person name="Perez M."/>
            <person name="Cauet S."/>
            <person name="Marande W."/>
            <person name="Chantry-Darmon C."/>
            <person name="Lopez-Roques C."/>
            <person name="Bouchez O."/>
            <person name="Berard A."/>
            <person name="Debelle F."/>
            <person name="Munos S."/>
            <person name="Bendahmane A."/>
            <person name="Berges H."/>
            <person name="Niebel A."/>
            <person name="Buitink J."/>
            <person name="Frugier F."/>
            <person name="Benhamed M."/>
            <person name="Crespi M."/>
            <person name="Gouzy J."/>
            <person name="Gamas P."/>
        </authorList>
    </citation>
    <scope>NUCLEOTIDE SEQUENCE [LARGE SCALE GENOMIC DNA]</scope>
    <source>
        <strain>cv. Jemalong A17</strain>
    </source>
</reference>
<reference key="4">
    <citation type="submission" date="2008-12" db="EMBL/GenBank/DDBJ databases">
        <title>Medicago truncatula full length cdna cloning project.</title>
        <authorList>
            <person name="Moskal W."/>
            <person name="Chan A."/>
            <person name="Cheung F."/>
            <person name="Xiao Y."/>
            <person name="Town C.D."/>
        </authorList>
    </citation>
    <scope>NUCLEOTIDE SEQUENCE [LARGE SCALE MRNA]</scope>
</reference>
<reference key="5">
    <citation type="journal article" date="2024" name="Plant Physiol. Biochem.">
        <title>Structural, kinetic, and evolutionary peculiarities of HISN3, a plant 5'-ProFAR isomerase.</title>
        <authorList>
            <person name="Witek W."/>
            <person name="Imiolczyk B."/>
            <person name="Ruszkowski M."/>
        </authorList>
    </citation>
    <scope>X-RAY CRYSTALLOGRAPHY (1.54 ANGSTROMS) OF 42-312 IN COMPLEX WITH SODIUM ION; 5'-PROFAR AND PRFAR</scope>
    <scope>FUNCTION</scope>
    <scope>MUTAGENESIS OF ASP-57 AND 74-LEU--SER-80</scope>
    <scope>CATALYTIC ACTIVITY</scope>
    <scope>BIOPHYSICOCHEMICAL PROPERTIES</scope>
    <scope>COFACTOR</scope>
    <scope>PATHWAY</scope>
</reference>
<proteinExistence type="evidence at protein level"/>
<gene>
    <name evidence="3" type="primary">HISN3</name>
    <name evidence="6" type="ordered locus">MTR_2g015010</name>
    <name evidence="7" type="ordered locus">MtrunA17_Chr2g0283151</name>
</gene>
<evidence type="ECO:0000255" key="1"/>
<evidence type="ECO:0000269" key="2">
    <source>
    </source>
</evidence>
<evidence type="ECO:0000303" key="3">
    <source>
    </source>
</evidence>
<evidence type="ECO:0000305" key="4"/>
<evidence type="ECO:0000305" key="5">
    <source>
    </source>
</evidence>
<evidence type="ECO:0000312" key="6">
    <source>
        <dbReference type="EMBL" id="AES63938.1"/>
    </source>
</evidence>
<evidence type="ECO:0000312" key="7">
    <source>
        <dbReference type="EMBL" id="RHN72021.1"/>
    </source>
</evidence>
<evidence type="ECO:0007744" key="8">
    <source>
        <dbReference type="PDB" id="9FCF"/>
    </source>
</evidence>
<evidence type="ECO:0007744" key="9">
    <source>
        <dbReference type="PDB" id="9FCG"/>
    </source>
</evidence>
<comment type="function">
    <text evidence="2">Component of the histidine biosynthesis pathway that catalyzes the isomerization of 5'-ProFAR (pro-phosphoribosyl formimino-5-aminoimidazole-4-carboxamide ribonucleotide, referred as 1-(5-phospho-beta-D-ribosyl)-5-[(5-phospho-beta-D-ribosylamino)methylideneamino]imidazole-4-carboxamide) to PrFAR (phosphoribulosyl formimino-5-aminoimidazole-4-carboxamide ribonucleotide, referred as 5-[(5-phospho-1-deoxy-D-ribulos-1-ylimino)methylamino]-1-(5-phospho-beta-D-ribosyl)imidazole-4-carboxamide) (PubMed:39186852).</text>
</comment>
<comment type="catalytic activity">
    <reaction evidence="2">
        <text>1-(5-phospho-beta-D-ribosyl)-5-[(5-phospho-beta-D-ribosylamino)methylideneamino]imidazole-4-carboxamide = 5-[(5-phospho-1-deoxy-D-ribulos-1-ylimino)methylamino]-1-(5-phospho-beta-D-ribosyl)imidazole-4-carboxamide</text>
        <dbReference type="Rhea" id="RHEA:15469"/>
        <dbReference type="ChEBI" id="CHEBI:58435"/>
        <dbReference type="ChEBI" id="CHEBI:58525"/>
        <dbReference type="EC" id="5.3.1.16"/>
    </reaction>
    <physiologicalReaction direction="left-to-right" evidence="2">
        <dbReference type="Rhea" id="RHEA:15470"/>
    </physiologicalReaction>
</comment>
<comment type="cofactor">
    <cofactor evidence="2">
        <name>Na(+)</name>
        <dbReference type="ChEBI" id="CHEBI:29101"/>
    </cofactor>
    <text evidence="2">Binds 2 sodium ions to optimize substrate binding.</text>
</comment>
<comment type="biophysicochemical properties">
    <kinetics>
        <KM evidence="2">4.6 uM for PrFAR</KM>
        <text evidence="2">kcat is 9.7 sec(-1) with PrFAR as substrate.</text>
    </kinetics>
</comment>
<comment type="pathway">
    <text evidence="2">Amino-acid biosynthesis; L-histidine biosynthesis; L-histidine from 5-phospho-alpha-D-ribose 1-diphosphate: step 4/9.</text>
</comment>
<comment type="subcellular location">
    <subcellularLocation>
        <location evidence="1">Plastid</location>
        <location evidence="1">Chloroplast</location>
    </subcellularLocation>
</comment>
<comment type="similarity">
    <text evidence="4">Belongs to the HisA/HisF family.</text>
</comment>
<name>HISN3_MEDTR</name>
<organism>
    <name type="scientific">Medicago truncatula</name>
    <name type="common">Barrel medic</name>
    <name type="synonym">Medicago tribuloides</name>
    <dbReference type="NCBI Taxonomy" id="3880"/>
    <lineage>
        <taxon>Eukaryota</taxon>
        <taxon>Viridiplantae</taxon>
        <taxon>Streptophyta</taxon>
        <taxon>Embryophyta</taxon>
        <taxon>Tracheophyta</taxon>
        <taxon>Spermatophyta</taxon>
        <taxon>Magnoliopsida</taxon>
        <taxon>eudicotyledons</taxon>
        <taxon>Gunneridae</taxon>
        <taxon>Pentapetalae</taxon>
        <taxon>rosids</taxon>
        <taxon>fabids</taxon>
        <taxon>Fabales</taxon>
        <taxon>Fabaceae</taxon>
        <taxon>Papilionoideae</taxon>
        <taxon>50 kb inversion clade</taxon>
        <taxon>NPAAA clade</taxon>
        <taxon>Hologalegina</taxon>
        <taxon>IRL clade</taxon>
        <taxon>Trifolieae</taxon>
        <taxon>Medicago</taxon>
    </lineage>
</organism>
<accession>G7IFI7</accession>
<accession>A0A396J617</accession>
<accession>B7FHU9</accession>
<feature type="transit peptide" description="Chloroplast" evidence="1">
    <location>
        <begin position="1"/>
        <end position="67"/>
    </location>
</feature>
<feature type="chain" id="PRO_0000462477" description="1-(5-phosphoribosyl)-5-[(5-phosphoribosylamino)methylideneamino] imidazole-4-carboxamide isomerase HISN3, chloroplastic">
    <location>
        <begin position="68"/>
        <end position="312"/>
    </location>
</feature>
<feature type="binding site" evidence="2 8">
    <location>
        <position position="57"/>
    </location>
    <ligand>
        <name>1-(5-phospho-beta-D-ribosyl)-5-[(5-phospho-beta-D-ribosylamino)methylideneamino]imidazole-4-carboxamide</name>
        <dbReference type="ChEBI" id="CHEBI:58435"/>
    </ligand>
</feature>
<feature type="binding site" evidence="5 9">
    <location>
        <position position="65"/>
    </location>
    <ligand>
        <name>5-[(5-phospho-1-deoxy-D-ribulos-1-ylimino)methylamino]-1-(5-phospho-beta-D-ribosyl)imidazole-4-carboxamide</name>
        <dbReference type="ChEBI" id="CHEBI:58525"/>
    </ligand>
</feature>
<feature type="binding site" evidence="2 8 9">
    <location>
        <position position="65"/>
    </location>
    <ligand>
        <name>Na(+)</name>
        <dbReference type="ChEBI" id="CHEBI:29101"/>
        <label>1</label>
    </ligand>
</feature>
<feature type="binding site" evidence="2 8 9">
    <location>
        <position position="66"/>
    </location>
    <ligand>
        <name>Na(+)</name>
        <dbReference type="ChEBI" id="CHEBI:29101"/>
        <label>1</label>
    </ligand>
</feature>
<feature type="binding site" evidence="5 8">
    <location>
        <position position="68"/>
    </location>
    <ligand>
        <name>1-(5-phospho-beta-D-ribosyl)-5-[(5-phospho-beta-D-ribosylamino)methylideneamino]imidazole-4-carboxamide</name>
        <dbReference type="ChEBI" id="CHEBI:58435"/>
    </ligand>
</feature>
<feature type="binding site" evidence="5 9">
    <location>
        <position position="108"/>
    </location>
    <ligand>
        <name>5-[(5-phospho-1-deoxy-D-ribulos-1-ylimino)methylamino]-1-(5-phospho-beta-D-ribosyl)imidazole-4-carboxamide</name>
        <dbReference type="ChEBI" id="CHEBI:58525"/>
    </ligand>
</feature>
<feature type="binding site" evidence="5 8">
    <location>
        <position position="138"/>
    </location>
    <ligand>
        <name>1-(5-phospho-beta-D-ribosyl)-5-[(5-phospho-beta-D-ribosylamino)methylideneamino]imidazole-4-carboxamide</name>
        <dbReference type="ChEBI" id="CHEBI:58435"/>
    </ligand>
</feature>
<feature type="binding site" evidence="5 9">
    <location>
        <position position="138"/>
    </location>
    <ligand>
        <name>5-[(5-phospho-1-deoxy-D-ribulos-1-ylimino)methylamino]-1-(5-phospho-beta-D-ribosyl)imidazole-4-carboxamide</name>
        <dbReference type="ChEBI" id="CHEBI:58525"/>
    </ligand>
</feature>
<feature type="binding site" evidence="5 8">
    <location>
        <position position="158"/>
    </location>
    <ligand>
        <name>1-(5-phospho-beta-D-ribosyl)-5-[(5-phospho-beta-D-ribosylamino)methylideneamino]imidazole-4-carboxamide</name>
        <dbReference type="ChEBI" id="CHEBI:58435"/>
    </ligand>
</feature>
<feature type="binding site" evidence="5 9">
    <location>
        <position position="158"/>
    </location>
    <ligand>
        <name>5-[(5-phospho-1-deoxy-D-ribulos-1-ylimino)methylamino]-1-(5-phospho-beta-D-ribosyl)imidazole-4-carboxamide</name>
        <dbReference type="ChEBI" id="CHEBI:58525"/>
    </ligand>
</feature>
<feature type="binding site" evidence="5 8">
    <location>
        <position position="159"/>
    </location>
    <ligand>
        <name>1-(5-phospho-beta-D-ribosyl)-5-[(5-phospho-beta-D-ribosylamino)methylideneamino]imidazole-4-carboxamide</name>
        <dbReference type="ChEBI" id="CHEBI:58435"/>
    </ligand>
</feature>
<feature type="binding site" evidence="5 9">
    <location>
        <position position="159"/>
    </location>
    <ligand>
        <name>5-[(5-phospho-1-deoxy-D-ribulos-1-ylimino)methylamino]-1-(5-phospho-beta-D-ribosyl)imidazole-4-carboxamide</name>
        <dbReference type="ChEBI" id="CHEBI:58525"/>
    </ligand>
</feature>
<feature type="binding site" evidence="2 9">
    <location>
        <position position="159"/>
    </location>
    <ligand>
        <name>Na(+)</name>
        <dbReference type="ChEBI" id="CHEBI:29101"/>
        <label>2</label>
    </ligand>
</feature>
<feature type="binding site" evidence="2 9">
    <location>
        <position position="162"/>
    </location>
    <ligand>
        <name>Na(+)</name>
        <dbReference type="ChEBI" id="CHEBI:29101"/>
        <label>2</label>
    </ligand>
</feature>
<feature type="binding site" evidence="5 8">
    <location>
        <position position="187"/>
    </location>
    <ligand>
        <name>1-(5-phospho-beta-D-ribosyl)-5-[(5-phospho-beta-D-ribosylamino)methylideneamino]imidazole-4-carboxamide</name>
        <dbReference type="ChEBI" id="CHEBI:58435"/>
    </ligand>
</feature>
<feature type="binding site" evidence="5 9">
    <location>
        <position position="187"/>
    </location>
    <ligand>
        <name>5-[(5-phospho-1-deoxy-D-ribulos-1-ylimino)methylamino]-1-(5-phospho-beta-D-ribosyl)imidazole-4-carboxamide</name>
        <dbReference type="ChEBI" id="CHEBI:58525"/>
    </ligand>
</feature>
<feature type="binding site" evidence="5 8">
    <location>
        <position position="203"/>
    </location>
    <ligand>
        <name>1-(5-phospho-beta-D-ribosyl)-5-[(5-phospho-beta-D-ribosylamino)methylideneamino]imidazole-4-carboxamide</name>
        <dbReference type="ChEBI" id="CHEBI:58435"/>
    </ligand>
</feature>
<feature type="binding site" evidence="5 8">
    <location>
        <position position="204"/>
    </location>
    <ligand>
        <name>1-(5-phospho-beta-D-ribosyl)-5-[(5-phospho-beta-D-ribosylamino)methylideneamino]imidazole-4-carboxamide</name>
        <dbReference type="ChEBI" id="CHEBI:58435"/>
    </ligand>
</feature>
<feature type="binding site" evidence="5 9">
    <location>
        <position position="204"/>
    </location>
    <ligand>
        <name>5-[(5-phospho-1-deoxy-D-ribulos-1-ylimino)methylamino]-1-(5-phospho-beta-D-ribosyl)imidazole-4-carboxamide</name>
        <dbReference type="ChEBI" id="CHEBI:58525"/>
    </ligand>
</feature>
<feature type="binding site" evidence="5 8">
    <location>
        <position position="230"/>
    </location>
    <ligand>
        <name>1-(5-phospho-beta-D-ribosyl)-5-[(5-phospho-beta-D-ribosylamino)methylideneamino]imidazole-4-carboxamide</name>
        <dbReference type="ChEBI" id="CHEBI:58435"/>
    </ligand>
</feature>
<feature type="binding site" evidence="2 8 9">
    <location>
        <position position="235"/>
    </location>
    <ligand>
        <name>Na(+)</name>
        <dbReference type="ChEBI" id="CHEBI:29101"/>
        <label>1</label>
    </ligand>
</feature>
<feature type="binding site" evidence="5 8">
    <location>
        <position position="236"/>
    </location>
    <ligand>
        <name>1-(5-phospho-beta-D-ribosyl)-5-[(5-phospho-beta-D-ribosylamino)methylideneamino]imidazole-4-carboxamide</name>
        <dbReference type="ChEBI" id="CHEBI:58435"/>
    </ligand>
</feature>
<feature type="binding site" evidence="5 9">
    <location>
        <position position="236"/>
    </location>
    <ligand>
        <name>5-[(5-phospho-1-deoxy-D-ribulos-1-ylimino)methylamino]-1-(5-phospho-beta-D-ribosyl)imidazole-4-carboxamide</name>
        <dbReference type="ChEBI" id="CHEBI:58525"/>
    </ligand>
</feature>
<feature type="binding site" evidence="5 8">
    <location>
        <position position="262"/>
    </location>
    <ligand>
        <name>1-(5-phospho-beta-D-ribosyl)-5-[(5-phospho-beta-D-ribosylamino)methylideneamino]imidazole-4-carboxamide</name>
        <dbReference type="ChEBI" id="CHEBI:58435"/>
    </ligand>
</feature>
<feature type="binding site" evidence="5 9">
    <location>
        <position position="262"/>
    </location>
    <ligand>
        <name>5-[(5-phospho-1-deoxy-D-ribulos-1-ylimino)methylamino]-1-(5-phospho-beta-D-ribosyl)imidazole-4-carboxamide</name>
        <dbReference type="ChEBI" id="CHEBI:58525"/>
    </ligand>
</feature>
<feature type="binding site" evidence="5 8">
    <location>
        <position position="285"/>
    </location>
    <ligand>
        <name>1-(5-phospho-beta-D-ribosyl)-5-[(5-phospho-beta-D-ribosylamino)methylideneamino]imidazole-4-carboxamide</name>
        <dbReference type="ChEBI" id="CHEBI:58435"/>
    </ligand>
</feature>
<feature type="binding site" evidence="5 9">
    <location>
        <position position="285"/>
    </location>
    <ligand>
        <name>5-[(5-phospho-1-deoxy-D-ribulos-1-ylimino)methylamino]-1-(5-phospho-beta-D-ribosyl)imidazole-4-carboxamide</name>
        <dbReference type="ChEBI" id="CHEBI:58525"/>
    </ligand>
</feature>
<feature type="binding site" evidence="5 8">
    <location>
        <position position="286"/>
    </location>
    <ligand>
        <name>1-(5-phospho-beta-D-ribosyl)-5-[(5-phospho-beta-D-ribosylamino)methylideneamino]imidazole-4-carboxamide</name>
        <dbReference type="ChEBI" id="CHEBI:58435"/>
    </ligand>
</feature>
<feature type="binding site" evidence="5 9">
    <location>
        <position position="286"/>
    </location>
    <ligand>
        <name>5-[(5-phospho-1-deoxy-D-ribulos-1-ylimino)methylamino]-1-(5-phospho-beta-D-ribosyl)imidazole-4-carboxamide</name>
        <dbReference type="ChEBI" id="CHEBI:58525"/>
    </ligand>
</feature>
<feature type="mutagenesis site" description="Lost catalytic activity." evidence="2">
    <original>D</original>
    <variation>N</variation>
    <location>
        <position position="57"/>
    </location>
</feature>
<feature type="mutagenesis site" description="Strongly impaired catalytic efficiency." evidence="2">
    <location>
        <begin position="74"/>
        <end position="80"/>
    </location>
</feature>
<feature type="sequence conflict" description="In Ref. 4; ACJ84328." evidence="4" ref="4">
    <original>A</original>
    <variation>T</variation>
    <location>
        <position position="224"/>
    </location>
</feature>
<sequence>MRSPASTPSIRGGAFASSPILRHNHLPFLRLNPPSSSPTRSSPPSIQCSVQFRPCIDIHKGKVKQIVGSTLKDLKDDDGSDPITNFESDKSAAEYATLYKQDGLKGGHVIMLGADPFSKAASLEALHAYPGGLQVGGGINSDNCLSYIEEGASHVIVTSYVFNNGQMDLERLKDLVRIVGKERLVLDLSCRKKEGKYAIVTDRWQKFSDVSLDAKVMEFLANFADEFLVHGVDVEGKKLGIDEELVALLGKHSPIPVTYAGGVTVMDDLERIRTAGMDNVDVTVGSALDIFGGNLAYKDVVAWHNQQKVSVA</sequence>
<protein>
    <recommendedName>
        <fullName evidence="3">1-(5-phosphoribosyl)-5-[(5-phosphoribosylamino)methylideneamino] imidazole-4-carboxamide isomerase HISN3, chloroplastic</fullName>
        <ecNumber evidence="2">5.3.1.16</ecNumber>
    </recommendedName>
    <alternativeName>
        <fullName evidence="3">5'-proFAR isomerase 3</fullName>
    </alternativeName>
    <alternativeName>
        <fullName evidence="3">Phosphoribosylformimino-5-aminoimidazole carboxamide ribotide isomerase HISN3</fullName>
    </alternativeName>
    <alternativeName>
        <fullName evidence="3">Protein HISTIDINE BIOSYNTHESIS 3</fullName>
        <shortName evidence="3">MtHISN3</shortName>
    </alternativeName>
</protein>
<dbReference type="EC" id="5.3.1.16" evidence="2"/>
<dbReference type="EMBL" id="CM001218">
    <property type="protein sequence ID" value="AES63938.1"/>
    <property type="molecule type" value="Genomic_DNA"/>
</dbReference>
<dbReference type="EMBL" id="PSQE01000002">
    <property type="protein sequence ID" value="RHN72021.1"/>
    <property type="molecule type" value="Genomic_DNA"/>
</dbReference>
<dbReference type="EMBL" id="BT051664">
    <property type="protein sequence ID" value="ACJ84328.1"/>
    <property type="molecule type" value="mRNA"/>
</dbReference>
<dbReference type="PDB" id="9FCF">
    <property type="method" value="X-ray"/>
    <property type="resolution" value="2.36 A"/>
    <property type="chains" value="A=42-312"/>
</dbReference>
<dbReference type="PDB" id="9FCG">
    <property type="method" value="X-ray"/>
    <property type="resolution" value="1.54 A"/>
    <property type="chains" value="A=42-312"/>
</dbReference>
<dbReference type="PDBsum" id="9FCF"/>
<dbReference type="PDBsum" id="9FCG"/>
<dbReference type="SMR" id="G7IFI7"/>
<dbReference type="STRING" id="3880.G7IFI7"/>
<dbReference type="PaxDb" id="3880-AES63938"/>
<dbReference type="EnsemblPlants" id="rna7688">
    <property type="protein sequence ID" value="RHN72021.1"/>
    <property type="gene ID" value="gene7688"/>
</dbReference>
<dbReference type="Gramene" id="rna7688">
    <property type="protein sequence ID" value="RHN72021.1"/>
    <property type="gene ID" value="gene7688"/>
</dbReference>
<dbReference type="KEGG" id="mtr:11441829"/>
<dbReference type="eggNOG" id="KOG3055">
    <property type="taxonomic scope" value="Eukaryota"/>
</dbReference>
<dbReference type="HOGENOM" id="CLU_065050_0_1_1"/>
<dbReference type="OMA" id="IEWNKTH"/>
<dbReference type="OrthoDB" id="312953at2759"/>
<dbReference type="UniPathway" id="UPA00031">
    <property type="reaction ID" value="UER00009"/>
</dbReference>
<dbReference type="Proteomes" id="UP000002051">
    <property type="component" value="Chromosome 2"/>
</dbReference>
<dbReference type="Proteomes" id="UP000265566">
    <property type="component" value="Chromosome 2"/>
</dbReference>
<dbReference type="GO" id="GO:0009507">
    <property type="term" value="C:chloroplast"/>
    <property type="evidence" value="ECO:0007669"/>
    <property type="project" value="UniProtKB-SubCell"/>
</dbReference>
<dbReference type="GO" id="GO:0005737">
    <property type="term" value="C:cytoplasm"/>
    <property type="evidence" value="ECO:0000318"/>
    <property type="project" value="GO_Central"/>
</dbReference>
<dbReference type="GO" id="GO:0003949">
    <property type="term" value="F:1-(5-phosphoribosyl)-5-[(5-phosphoribosylamino)methylideneamino]imidazole-4-carboxamide isomerase activity"/>
    <property type="evidence" value="ECO:0000318"/>
    <property type="project" value="GO_Central"/>
</dbReference>
<dbReference type="GO" id="GO:0000105">
    <property type="term" value="P:L-histidine biosynthetic process"/>
    <property type="evidence" value="ECO:0000318"/>
    <property type="project" value="GO_Central"/>
</dbReference>
<dbReference type="CDD" id="cd04723">
    <property type="entry name" value="HisA_HisF"/>
    <property type="match status" value="1"/>
</dbReference>
<dbReference type="FunFam" id="3.20.20.70:FF:000110">
    <property type="entry name" value="1-(5-phosphoribosyl)-5-[(5-phosphoribosylamino)methylideneamino] imidazole-4-carboxamide isomerase, chloroplastic"/>
    <property type="match status" value="1"/>
</dbReference>
<dbReference type="Gene3D" id="3.20.20.70">
    <property type="entry name" value="Aldolase class I"/>
    <property type="match status" value="1"/>
</dbReference>
<dbReference type="InterPro" id="IPR013785">
    <property type="entry name" value="Aldolase_TIM"/>
</dbReference>
<dbReference type="InterPro" id="IPR011858">
    <property type="entry name" value="His6-like_euk"/>
</dbReference>
<dbReference type="InterPro" id="IPR006062">
    <property type="entry name" value="His_biosynth"/>
</dbReference>
<dbReference type="InterPro" id="IPR044524">
    <property type="entry name" value="Isoase_HisA-like"/>
</dbReference>
<dbReference type="InterPro" id="IPR011060">
    <property type="entry name" value="RibuloseP-bd_barrel"/>
</dbReference>
<dbReference type="NCBIfam" id="TIGR02129">
    <property type="entry name" value="hisA_euk"/>
    <property type="match status" value="1"/>
</dbReference>
<dbReference type="PANTHER" id="PTHR43090">
    <property type="entry name" value="1-(5-PHOSPHORIBOSYL)-5-[(5-PHOSPHORIBOSYLAMINO)METHYLIDENEAMINO] IMIDAZOLE-4-CARBOXAMIDE ISOMERASE"/>
    <property type="match status" value="1"/>
</dbReference>
<dbReference type="PANTHER" id="PTHR43090:SF2">
    <property type="entry name" value="1-(5-PHOSPHORIBOSYL)-5-[(5-PHOSPHORIBOSYLAMINO)METHYLIDENEAMINO] IMIDAZOLE-4-CARBOXAMIDE ISOMERASE"/>
    <property type="match status" value="1"/>
</dbReference>
<dbReference type="Pfam" id="PF00977">
    <property type="entry name" value="His_biosynth"/>
    <property type="match status" value="1"/>
</dbReference>
<dbReference type="SUPFAM" id="SSF51366">
    <property type="entry name" value="Ribulose-phoshate binding barrel"/>
    <property type="match status" value="1"/>
</dbReference>